<reference key="1">
    <citation type="submission" date="2008-06" db="EMBL/GenBank/DDBJ databases">
        <title>Complete sequence of Stenotrophomonas maltophilia R551-3.</title>
        <authorList>
            <consortium name="US DOE Joint Genome Institute"/>
            <person name="Lucas S."/>
            <person name="Copeland A."/>
            <person name="Lapidus A."/>
            <person name="Glavina del Rio T."/>
            <person name="Dalin E."/>
            <person name="Tice H."/>
            <person name="Pitluck S."/>
            <person name="Chain P."/>
            <person name="Malfatti S."/>
            <person name="Shin M."/>
            <person name="Vergez L."/>
            <person name="Lang D."/>
            <person name="Schmutz J."/>
            <person name="Larimer F."/>
            <person name="Land M."/>
            <person name="Hauser L."/>
            <person name="Kyrpides N."/>
            <person name="Mikhailova N."/>
            <person name="Taghavi S."/>
            <person name="Monchy S."/>
            <person name="Newman L."/>
            <person name="Vangronsveld J."/>
            <person name="van der Lelie D."/>
            <person name="Richardson P."/>
        </authorList>
    </citation>
    <scope>NUCLEOTIDE SEQUENCE [LARGE SCALE GENOMIC DNA]</scope>
    <source>
        <strain>R551-3</strain>
    </source>
</reference>
<organism>
    <name type="scientific">Stenotrophomonas maltophilia (strain R551-3)</name>
    <dbReference type="NCBI Taxonomy" id="391008"/>
    <lineage>
        <taxon>Bacteria</taxon>
        <taxon>Pseudomonadati</taxon>
        <taxon>Pseudomonadota</taxon>
        <taxon>Gammaproteobacteria</taxon>
        <taxon>Lysobacterales</taxon>
        <taxon>Lysobacteraceae</taxon>
        <taxon>Stenotrophomonas</taxon>
        <taxon>Stenotrophomonas maltophilia group</taxon>
    </lineage>
</organism>
<proteinExistence type="inferred from homology"/>
<gene>
    <name evidence="1" type="primary">efp</name>
    <name type="ordered locus">Smal_2742</name>
</gene>
<feature type="chain" id="PRO_1000096209" description="Elongation factor P">
    <location>
        <begin position="1"/>
        <end position="188"/>
    </location>
</feature>
<feature type="modified residue" description="N6-(3,6-diaminohexanoyl)-5-hydroxylysine" evidence="1">
    <location>
        <position position="34"/>
    </location>
</feature>
<keyword id="KW-0963">Cytoplasm</keyword>
<keyword id="KW-0251">Elongation factor</keyword>
<keyword id="KW-0379">Hydroxylation</keyword>
<keyword id="KW-0648">Protein biosynthesis</keyword>
<evidence type="ECO:0000255" key="1">
    <source>
        <dbReference type="HAMAP-Rule" id="MF_00141"/>
    </source>
</evidence>
<protein>
    <recommendedName>
        <fullName evidence="1">Elongation factor P</fullName>
        <shortName evidence="1">EF-P</shortName>
    </recommendedName>
</protein>
<sequence>MATAGMNDVKNGMKILVNNEPAVISETEFIKPGKGQAFTRVRYRFIKSGRTVEMTMKATDDVEVADVVDTNMDYMYSDGEYWHFMDPETFEQVQADKAGMGGAEKWLKGEESCIVTLFNGSPIFVQPPNFVELKITETDPGVRGDTSGGGGKPATLETGAVVRVPLFVNQDEIIKVDTRSGEYSSRVK</sequence>
<name>EFP_STRM5</name>
<comment type="function">
    <text evidence="1">Involved in peptide bond synthesis. Alleviates ribosome stalling that occurs when 3 or more consecutive Pro residues or the sequence PPG is present in a protein, possibly by augmenting the peptidyl transferase activity of the ribosome. Modification of Lys-34 is required for alleviation.</text>
</comment>
<comment type="pathway">
    <text evidence="1">Protein biosynthesis; polypeptide chain elongation.</text>
</comment>
<comment type="subcellular location">
    <subcellularLocation>
        <location evidence="1">Cytoplasm</location>
    </subcellularLocation>
</comment>
<comment type="PTM">
    <text evidence="1">May be beta-lysylated on the epsilon-amino group of Lys-34 by the combined action of EpmA and EpmB, and then hydroxylated on the C5 position of the same residue by EpmC (if this protein is present). Lysylation is critical for the stimulatory effect of EF-P on peptide-bond formation. The lysylation moiety may extend toward the peptidyltransferase center and stabilize the terminal 3-CCA end of the tRNA. Hydroxylation of the C5 position on Lys-34 may allow additional potential stabilizing hydrogen-bond interactions with the P-tRNA.</text>
</comment>
<comment type="similarity">
    <text evidence="1">Belongs to the elongation factor P family.</text>
</comment>
<dbReference type="EMBL" id="CP001111">
    <property type="protein sequence ID" value="ACF52442.1"/>
    <property type="molecule type" value="Genomic_DNA"/>
</dbReference>
<dbReference type="RefSeq" id="WP_006379771.1">
    <property type="nucleotide sequence ID" value="NC_011071.1"/>
</dbReference>
<dbReference type="SMR" id="B4SQB1"/>
<dbReference type="STRING" id="391008.Smal_2742"/>
<dbReference type="GeneID" id="97223796"/>
<dbReference type="KEGG" id="smt:Smal_2742"/>
<dbReference type="eggNOG" id="COG0231">
    <property type="taxonomic scope" value="Bacteria"/>
</dbReference>
<dbReference type="HOGENOM" id="CLU_074944_0_0_6"/>
<dbReference type="OrthoDB" id="9801844at2"/>
<dbReference type="UniPathway" id="UPA00345"/>
<dbReference type="Proteomes" id="UP000001867">
    <property type="component" value="Chromosome"/>
</dbReference>
<dbReference type="GO" id="GO:0005737">
    <property type="term" value="C:cytoplasm"/>
    <property type="evidence" value="ECO:0007669"/>
    <property type="project" value="UniProtKB-SubCell"/>
</dbReference>
<dbReference type="GO" id="GO:0003746">
    <property type="term" value="F:translation elongation factor activity"/>
    <property type="evidence" value="ECO:0007669"/>
    <property type="project" value="UniProtKB-UniRule"/>
</dbReference>
<dbReference type="GO" id="GO:0043043">
    <property type="term" value="P:peptide biosynthetic process"/>
    <property type="evidence" value="ECO:0007669"/>
    <property type="project" value="InterPro"/>
</dbReference>
<dbReference type="CDD" id="cd04470">
    <property type="entry name" value="S1_EF-P_repeat_1"/>
    <property type="match status" value="1"/>
</dbReference>
<dbReference type="CDD" id="cd05794">
    <property type="entry name" value="S1_EF-P_repeat_2"/>
    <property type="match status" value="1"/>
</dbReference>
<dbReference type="FunFam" id="2.30.30.30:FF:000003">
    <property type="entry name" value="Elongation factor P"/>
    <property type="match status" value="1"/>
</dbReference>
<dbReference type="FunFam" id="2.40.50.140:FF:000004">
    <property type="entry name" value="Elongation factor P"/>
    <property type="match status" value="1"/>
</dbReference>
<dbReference type="FunFam" id="2.40.50.140:FF:000009">
    <property type="entry name" value="Elongation factor P"/>
    <property type="match status" value="1"/>
</dbReference>
<dbReference type="Gene3D" id="2.30.30.30">
    <property type="match status" value="1"/>
</dbReference>
<dbReference type="Gene3D" id="2.40.50.140">
    <property type="entry name" value="Nucleic acid-binding proteins"/>
    <property type="match status" value="2"/>
</dbReference>
<dbReference type="HAMAP" id="MF_00141">
    <property type="entry name" value="EF_P"/>
    <property type="match status" value="1"/>
</dbReference>
<dbReference type="InterPro" id="IPR015365">
    <property type="entry name" value="Elong-fact-P_C"/>
</dbReference>
<dbReference type="InterPro" id="IPR012340">
    <property type="entry name" value="NA-bd_OB-fold"/>
</dbReference>
<dbReference type="InterPro" id="IPR014722">
    <property type="entry name" value="Rib_uL2_dom2"/>
</dbReference>
<dbReference type="InterPro" id="IPR020599">
    <property type="entry name" value="Transl_elong_fac_P/YeiP"/>
</dbReference>
<dbReference type="InterPro" id="IPR013185">
    <property type="entry name" value="Transl_elong_KOW-like"/>
</dbReference>
<dbReference type="InterPro" id="IPR001059">
    <property type="entry name" value="Transl_elong_P/YeiP_cen"/>
</dbReference>
<dbReference type="InterPro" id="IPR013852">
    <property type="entry name" value="Transl_elong_P/YeiP_CS"/>
</dbReference>
<dbReference type="InterPro" id="IPR011768">
    <property type="entry name" value="Transl_elongation_fac_P"/>
</dbReference>
<dbReference type="InterPro" id="IPR008991">
    <property type="entry name" value="Translation_prot_SH3-like_sf"/>
</dbReference>
<dbReference type="NCBIfam" id="TIGR00038">
    <property type="entry name" value="efp"/>
    <property type="match status" value="1"/>
</dbReference>
<dbReference type="NCBIfam" id="NF001810">
    <property type="entry name" value="PRK00529.1"/>
    <property type="match status" value="1"/>
</dbReference>
<dbReference type="PANTHER" id="PTHR30053">
    <property type="entry name" value="ELONGATION FACTOR P"/>
    <property type="match status" value="1"/>
</dbReference>
<dbReference type="PANTHER" id="PTHR30053:SF12">
    <property type="entry name" value="ELONGATION FACTOR P (EF-P) FAMILY PROTEIN"/>
    <property type="match status" value="1"/>
</dbReference>
<dbReference type="Pfam" id="PF01132">
    <property type="entry name" value="EFP"/>
    <property type="match status" value="1"/>
</dbReference>
<dbReference type="Pfam" id="PF08207">
    <property type="entry name" value="EFP_N"/>
    <property type="match status" value="1"/>
</dbReference>
<dbReference type="Pfam" id="PF09285">
    <property type="entry name" value="Elong-fact-P_C"/>
    <property type="match status" value="1"/>
</dbReference>
<dbReference type="PIRSF" id="PIRSF005901">
    <property type="entry name" value="EF-P"/>
    <property type="match status" value="1"/>
</dbReference>
<dbReference type="SMART" id="SM01185">
    <property type="entry name" value="EFP"/>
    <property type="match status" value="1"/>
</dbReference>
<dbReference type="SMART" id="SM00841">
    <property type="entry name" value="Elong-fact-P_C"/>
    <property type="match status" value="1"/>
</dbReference>
<dbReference type="SUPFAM" id="SSF50249">
    <property type="entry name" value="Nucleic acid-binding proteins"/>
    <property type="match status" value="2"/>
</dbReference>
<dbReference type="SUPFAM" id="SSF50104">
    <property type="entry name" value="Translation proteins SH3-like domain"/>
    <property type="match status" value="1"/>
</dbReference>
<dbReference type="PROSITE" id="PS01275">
    <property type="entry name" value="EFP"/>
    <property type="match status" value="1"/>
</dbReference>
<accession>B4SQB1</accession>